<dbReference type="EC" id="2.6.1.102" evidence="3 4"/>
<dbReference type="EMBL" id="AF062345">
    <property type="protein sequence ID" value="AAC38670.2"/>
    <property type="status" value="ALT_INIT"/>
    <property type="molecule type" value="Genomic_DNA"/>
</dbReference>
<dbReference type="EMBL" id="AE005673">
    <property type="protein sequence ID" value="AAK22996.1"/>
    <property type="molecule type" value="Genomic_DNA"/>
</dbReference>
<dbReference type="PIR" id="H87374">
    <property type="entry name" value="H87374"/>
</dbReference>
<dbReference type="RefSeq" id="NP_419828.1">
    <property type="nucleotide sequence ID" value="NC_002696.2"/>
</dbReference>
<dbReference type="RefSeq" id="WP_010918896.1">
    <property type="nucleotide sequence ID" value="NC_002696.2"/>
</dbReference>
<dbReference type="PDB" id="3BN1">
    <property type="method" value="X-ray"/>
    <property type="resolution" value="1.80 A"/>
    <property type="chains" value="A/B/C/D=2-371"/>
</dbReference>
<dbReference type="PDB" id="3DR4">
    <property type="method" value="X-ray"/>
    <property type="resolution" value="1.60 A"/>
    <property type="chains" value="A/B/C/D=1-371"/>
</dbReference>
<dbReference type="PDB" id="3DR7">
    <property type="method" value="X-ray"/>
    <property type="resolution" value="1.70 A"/>
    <property type="chains" value="A/B/C/D=1-371"/>
</dbReference>
<dbReference type="PDBsum" id="3BN1"/>
<dbReference type="PDBsum" id="3DR4"/>
<dbReference type="PDBsum" id="3DR7"/>
<dbReference type="SMR" id="Q9A9H3"/>
<dbReference type="STRING" id="190650.CC_1012"/>
<dbReference type="EnsemblBacteria" id="AAK22996">
    <property type="protein sequence ID" value="AAK22996"/>
    <property type="gene ID" value="CC_1012"/>
</dbReference>
<dbReference type="KEGG" id="ccr:CC_1012"/>
<dbReference type="PATRIC" id="fig|190650.5.peg.1030"/>
<dbReference type="eggNOG" id="COG0399">
    <property type="taxonomic scope" value="Bacteria"/>
</dbReference>
<dbReference type="HOGENOM" id="CLU_033332_7_2_5"/>
<dbReference type="BioCyc" id="CAULO:CC1012-MONOMER"/>
<dbReference type="BRENDA" id="2.6.1.102">
    <property type="organism ID" value="1218"/>
</dbReference>
<dbReference type="UniPathway" id="UPA00281"/>
<dbReference type="EvolutionaryTrace" id="Q9A9H3"/>
<dbReference type="Proteomes" id="UP000001816">
    <property type="component" value="Chromosome"/>
</dbReference>
<dbReference type="GO" id="GO:0102933">
    <property type="term" value="F:GDP-4-dehydro-6-deoxy-D-mannose-4-aminotransferase activity"/>
    <property type="evidence" value="ECO:0007669"/>
    <property type="project" value="UniProtKB-EC"/>
</dbReference>
<dbReference type="GO" id="GO:0030170">
    <property type="term" value="F:pyridoxal phosphate binding"/>
    <property type="evidence" value="ECO:0007669"/>
    <property type="project" value="TreeGrafter"/>
</dbReference>
<dbReference type="GO" id="GO:0009243">
    <property type="term" value="P:O antigen biosynthetic process"/>
    <property type="evidence" value="ECO:0007669"/>
    <property type="project" value="UniProtKB-UniPathway"/>
</dbReference>
<dbReference type="CDD" id="cd00616">
    <property type="entry name" value="AHBA_syn"/>
    <property type="match status" value="1"/>
</dbReference>
<dbReference type="FunFam" id="3.40.640.10:FF:000090">
    <property type="entry name" value="Pyridoxal phosphate-dependent aminotransferase"/>
    <property type="match status" value="1"/>
</dbReference>
<dbReference type="Gene3D" id="3.90.1150.10">
    <property type="entry name" value="Aspartate Aminotransferase, domain 1"/>
    <property type="match status" value="1"/>
</dbReference>
<dbReference type="Gene3D" id="3.40.640.10">
    <property type="entry name" value="Type I PLP-dependent aspartate aminotransferase-like (Major domain)"/>
    <property type="match status" value="1"/>
</dbReference>
<dbReference type="InterPro" id="IPR000653">
    <property type="entry name" value="DegT/StrS_aminotransferase"/>
</dbReference>
<dbReference type="InterPro" id="IPR015424">
    <property type="entry name" value="PyrdxlP-dep_Trfase"/>
</dbReference>
<dbReference type="InterPro" id="IPR015421">
    <property type="entry name" value="PyrdxlP-dep_Trfase_major"/>
</dbReference>
<dbReference type="InterPro" id="IPR015422">
    <property type="entry name" value="PyrdxlP-dep_Trfase_small"/>
</dbReference>
<dbReference type="PANTHER" id="PTHR30244:SF34">
    <property type="entry name" value="DTDP-4-AMINO-4,6-DIDEOXYGALACTOSE TRANSAMINASE"/>
    <property type="match status" value="1"/>
</dbReference>
<dbReference type="PANTHER" id="PTHR30244">
    <property type="entry name" value="TRANSAMINASE"/>
    <property type="match status" value="1"/>
</dbReference>
<dbReference type="Pfam" id="PF01041">
    <property type="entry name" value="DegT_DnrJ_EryC1"/>
    <property type="match status" value="1"/>
</dbReference>
<dbReference type="PIRSF" id="PIRSF000390">
    <property type="entry name" value="PLP_StrS"/>
    <property type="match status" value="1"/>
</dbReference>
<dbReference type="SUPFAM" id="SSF53383">
    <property type="entry name" value="PLP-dependent transferases"/>
    <property type="match status" value="1"/>
</dbReference>
<comment type="function">
    <text evidence="2 3 4">Catalyzes the synthesis of GDP-perosamine from GDP-4-keto-6-deoxy-D-mannose and L-glutamate. Can use only L-glutamate as amino donor. In vitro, can also use GDP-4-keto-3,6-dideoxymannose to produce GDP-3-deoxyperosamine. Involved in the formation of S-LPS, which is required for attachment of the protein S-layer to the outer membrane surface.</text>
</comment>
<comment type="catalytic activity">
    <reaction evidence="3 4">
        <text>GDP-alpha-D-perosamine + 2-oxoglutarate = GDP-4-dehydro-alpha-D-rhamnose + L-glutamate</text>
        <dbReference type="Rhea" id="RHEA:36779"/>
        <dbReference type="ChEBI" id="CHEBI:16810"/>
        <dbReference type="ChEBI" id="CHEBI:29985"/>
        <dbReference type="ChEBI" id="CHEBI:57964"/>
        <dbReference type="ChEBI" id="CHEBI:73996"/>
        <dbReference type="EC" id="2.6.1.102"/>
    </reaction>
</comment>
<comment type="cofactor">
    <cofactor evidence="3 4">
        <name>pyridoxal 5'-phosphate</name>
        <dbReference type="ChEBI" id="CHEBI:597326"/>
    </cofactor>
</comment>
<comment type="biophysicochemical properties">
    <kinetics>
        <KM evidence="4">0.013 mM for GDP-4-keto-6-deoxy-D-mannose</KM>
        <KM evidence="4">0.016 mM for GDP-4-keto-3,6-dideoxymannose</KM>
        <KM evidence="4">4.6 mM for L-glutamate (with GDP-4-keto-6-deoxy-D-mannose as cosubstrate)</KM>
        <KM evidence="4">0.13 mM for L-glutamate (with GDP-4-keto-3,6-dideoxymannose as cosubstrate)</KM>
        <text evidence="4">kcat is 2.7 sec(-1) for GDP-4-keto-6-deoxy-D-mannose. kcat is 0.015 sec(-1) for GDP-4-keto-3,6-dideoxymannose.</text>
    </kinetics>
</comment>
<comment type="pathway">
    <text evidence="2">Bacterial outer membrane biogenesis; LPS O-antigen biosynthesis.</text>
</comment>
<comment type="subunit">
    <text evidence="3">Homodimer.</text>
</comment>
<comment type="disruption phenotype">
    <text evidence="2">Mutant produces altered S-LPS.</text>
</comment>
<comment type="similarity">
    <text evidence="8">Belongs to the DegT/DnrJ/EryC1 family.</text>
</comment>
<comment type="sequence caution" evidence="8">
    <conflict type="erroneous initiation">
        <sequence resource="EMBL-CDS" id="AAC38670"/>
    </conflict>
    <text>Truncated N-terminus.</text>
</comment>
<accession>Q9A9H3</accession>
<accession>O85354</accession>
<gene>
    <name evidence="5" type="primary">per</name>
    <name evidence="9" type="ordered locus">CC_1012</name>
</gene>
<proteinExistence type="evidence at protein level"/>
<name>GDPPS_CAUVC</name>
<feature type="chain" id="PRO_0000430719" description="GDP-perosamine synthase">
    <location>
        <begin position="1"/>
        <end position="371"/>
    </location>
</feature>
<feature type="modified residue" description="N6-(pyridoxal phosphate)lysine" evidence="1 7">
    <location>
        <position position="186"/>
    </location>
</feature>
<feature type="mutagenesis site" description="Loss of activity." evidence="4">
    <original>K</original>
    <variation>A</variation>
    <location>
        <position position="186"/>
    </location>
</feature>
<feature type="helix" evidence="10">
    <location>
        <begin position="18"/>
        <end position="28"/>
    </location>
</feature>
<feature type="helix" evidence="11">
    <location>
        <begin position="36"/>
        <end position="49"/>
    </location>
</feature>
<feature type="strand" evidence="11">
    <location>
        <begin position="52"/>
        <end position="59"/>
    </location>
</feature>
<feature type="helix" evidence="11">
    <location>
        <begin position="60"/>
        <end position="71"/>
    </location>
</feature>
<feature type="strand" evidence="11">
    <location>
        <begin position="78"/>
        <end position="85"/>
    </location>
</feature>
<feature type="helix" evidence="11">
    <location>
        <begin position="88"/>
        <end position="95"/>
    </location>
</feature>
<feature type="strand" evidence="11">
    <location>
        <begin position="99"/>
        <end position="103"/>
    </location>
</feature>
<feature type="turn" evidence="11">
    <location>
        <begin position="107"/>
        <end position="109"/>
    </location>
</feature>
<feature type="helix" evidence="11">
    <location>
        <begin position="114"/>
        <end position="116"/>
    </location>
</feature>
<feature type="helix" evidence="11">
    <location>
        <begin position="118"/>
        <end position="120"/>
    </location>
</feature>
<feature type="strand" evidence="11">
    <location>
        <begin position="125"/>
        <end position="128"/>
    </location>
</feature>
<feature type="helix" evidence="11">
    <location>
        <begin position="133"/>
        <end position="135"/>
    </location>
</feature>
<feature type="helix" evidence="11">
    <location>
        <begin position="140"/>
        <end position="149"/>
    </location>
</feature>
<feature type="strand" evidence="11">
    <location>
        <begin position="153"/>
        <end position="157"/>
    </location>
</feature>
<feature type="strand" evidence="11">
    <location>
        <begin position="173"/>
        <end position="181"/>
    </location>
</feature>
<feature type="strand" evidence="11">
    <location>
        <begin position="186"/>
        <end position="188"/>
    </location>
</feature>
<feature type="strand" evidence="11">
    <location>
        <begin position="194"/>
        <end position="199"/>
    </location>
</feature>
<feature type="helix" evidence="11">
    <location>
        <begin position="201"/>
        <end position="211"/>
    </location>
</feature>
<feature type="helix" evidence="11">
    <location>
        <begin position="234"/>
        <end position="245"/>
    </location>
</feature>
<feature type="helix" evidence="11">
    <location>
        <begin position="247"/>
        <end position="265"/>
    </location>
</feature>
<feature type="helix" evidence="11">
    <location>
        <begin position="266"/>
        <end position="268"/>
    </location>
</feature>
<feature type="strand" evidence="11">
    <location>
        <begin position="271"/>
        <end position="273"/>
    </location>
</feature>
<feature type="strand" evidence="11">
    <location>
        <begin position="286"/>
        <end position="292"/>
    </location>
</feature>
<feature type="helix" evidence="11">
    <location>
        <begin position="300"/>
        <end position="309"/>
    </location>
</feature>
<feature type="helix" evidence="11">
    <location>
        <begin position="321"/>
        <end position="323"/>
    </location>
</feature>
<feature type="helix" evidence="11">
    <location>
        <begin position="325"/>
        <end position="330"/>
    </location>
</feature>
<feature type="helix" evidence="11">
    <location>
        <begin position="336"/>
        <end position="344"/>
    </location>
</feature>
<feature type="strand" evidence="11">
    <location>
        <begin position="345"/>
        <end position="348"/>
    </location>
</feature>
<feature type="helix" evidence="11">
    <location>
        <begin position="356"/>
        <end position="367"/>
    </location>
</feature>
<keyword id="KW-0002">3D-structure</keyword>
<keyword id="KW-0032">Aminotransferase</keyword>
<keyword id="KW-0448">Lipopolysaccharide biosynthesis</keyword>
<keyword id="KW-0663">Pyridoxal phosphate</keyword>
<keyword id="KW-1185">Reference proteome</keyword>
<keyword id="KW-0808">Transferase</keyword>
<evidence type="ECO:0000250" key="1">
    <source>
        <dbReference type="UniProtKB" id="Q8ZNF3"/>
    </source>
</evidence>
<evidence type="ECO:0000269" key="2">
    <source>
    </source>
</evidence>
<evidence type="ECO:0000269" key="3">
    <source>
    </source>
</evidence>
<evidence type="ECO:0000269" key="4">
    <source>
    </source>
</evidence>
<evidence type="ECO:0000303" key="5">
    <source>
    </source>
</evidence>
<evidence type="ECO:0000303" key="6">
    <source>
    </source>
</evidence>
<evidence type="ECO:0000303" key="7">
    <source>
    </source>
</evidence>
<evidence type="ECO:0000305" key="8"/>
<evidence type="ECO:0000312" key="9">
    <source>
        <dbReference type="EMBL" id="AAK22996.1"/>
    </source>
</evidence>
<evidence type="ECO:0007829" key="10">
    <source>
        <dbReference type="PDB" id="3BN1"/>
    </source>
</evidence>
<evidence type="ECO:0007829" key="11">
    <source>
        <dbReference type="PDB" id="3DR4"/>
    </source>
</evidence>
<reference key="1">
    <citation type="journal article" date="2001" name="Microbiology">
        <title>Identification of lipopolysaccharide O antigen synthesis genes required for attachment of the S-layer of Caulobacter crescentus.</title>
        <authorList>
            <person name="Awram P."/>
            <person name="Smit J."/>
        </authorList>
    </citation>
    <scope>NUCLEOTIDE SEQUENCE [GENOMIC DNA]</scope>
    <scope>FUNCTION</scope>
    <scope>PATHWAY</scope>
    <scope>DISRUPTION PHENOTYPE</scope>
    <source>
        <strain>ATCC 19089 / CIP 103742 / CB 15</strain>
    </source>
</reference>
<reference key="2">
    <citation type="journal article" date="2001" name="Proc. Natl. Acad. Sci. U.S.A.">
        <title>Complete genome sequence of Caulobacter crescentus.</title>
        <authorList>
            <person name="Nierman W.C."/>
            <person name="Feldblyum T.V."/>
            <person name="Laub M.T."/>
            <person name="Paulsen I.T."/>
            <person name="Nelson K.E."/>
            <person name="Eisen J.A."/>
            <person name="Heidelberg J.F."/>
            <person name="Alley M.R.K."/>
            <person name="Ohta N."/>
            <person name="Maddock J.R."/>
            <person name="Potocka I."/>
            <person name="Nelson W.C."/>
            <person name="Newton A."/>
            <person name="Stephens C."/>
            <person name="Phadke N.D."/>
            <person name="Ely B."/>
            <person name="DeBoy R.T."/>
            <person name="Dodson R.J."/>
            <person name="Durkin A.S."/>
            <person name="Gwinn M.L."/>
            <person name="Haft D.H."/>
            <person name="Kolonay J.F."/>
            <person name="Smit J."/>
            <person name="Craven M.B."/>
            <person name="Khouri H.M."/>
            <person name="Shetty J."/>
            <person name="Berry K.J."/>
            <person name="Utterback T.R."/>
            <person name="Tran K."/>
            <person name="Wolf A.M."/>
            <person name="Vamathevan J.J."/>
            <person name="Ermolaeva M.D."/>
            <person name="White O."/>
            <person name="Salzberg S.L."/>
            <person name="Venter J.C."/>
            <person name="Shapiro L."/>
            <person name="Fraser C.M."/>
        </authorList>
    </citation>
    <scope>NUCLEOTIDE SEQUENCE [LARGE SCALE GENOMIC DNA]</scope>
    <source>
        <strain>ATCC 19089 / CIP 103742 / CB 15</strain>
    </source>
</reference>
<reference key="3">
    <citation type="journal article" date="2008" name="Biochemistry">
        <title>GDP-perosamine synthase: structural analysis and production of a novel trideoxysugar.</title>
        <authorList>
            <person name="Cook P.D."/>
            <person name="Holden H.M."/>
        </authorList>
    </citation>
    <scope>X-RAY CRYSTALLOGRAPHY (1.80 ANGSTROMS) OF 2-371</scope>
    <scope>FUNCTION</scope>
    <scope>CATALYTIC ACTIVITY</scope>
    <scope>COFACTOR</scope>
    <scope>SUBUNIT</scope>
</reference>
<reference key="4">
    <citation type="journal article" date="2008" name="Biochemistry">
        <title>Accommodation of GDP-linked sugars in the active site of GDP-perosamine synthase.</title>
        <authorList>
            <person name="Cook P.D."/>
            <person name="Carney A.E."/>
            <person name="Holden H.M."/>
        </authorList>
    </citation>
    <scope>X-RAY CRYSTALLOGRAPHY (1.60 ANGSTROMS) OF MUTANT ALA-186 IN COMPLEX WITH GDP-PEROSAMINE AND WILD-TYPE IN COMPLEX WITH GDP-3-DEOXYPEROSAMINE</scope>
    <scope>FUNCTION</scope>
    <scope>CATALYTIC ACTIVITY</scope>
    <scope>COFACTOR</scope>
    <scope>BIOPHYSICOCHEMICAL PROPERTIES</scope>
    <scope>MUTAGENESIS OF LYS-186</scope>
</reference>
<organism>
    <name type="scientific">Caulobacter vibrioides (strain ATCC 19089 / CIP 103742 / CB 15)</name>
    <name type="common">Caulobacter crescentus</name>
    <dbReference type="NCBI Taxonomy" id="190650"/>
    <lineage>
        <taxon>Bacteria</taxon>
        <taxon>Pseudomonadati</taxon>
        <taxon>Pseudomonadota</taxon>
        <taxon>Alphaproteobacteria</taxon>
        <taxon>Caulobacterales</taxon>
        <taxon>Caulobacteraceae</taxon>
        <taxon>Caulobacter</taxon>
    </lineage>
</organism>
<protein>
    <recommendedName>
        <fullName evidence="6 7">GDP-perosamine synthase</fullName>
        <ecNumber evidence="3 4">2.6.1.102</ecNumber>
    </recommendedName>
</protein>
<sequence length="371" mass="40637">MSDLPRISVAAPRLDGNERDYVLECMDTTWISSVGRFIVEFEKAFADYCGVKHAIACNNGTTALHLALVAMGIGPGDEVIVPSLTYIASANSVTYCGATPVLVDNDPRTFNLDAAKLEALITPRTKAIMPVHLYGQICDMDPILEVARRHNLLVIEDAAEAVGATYRGKKSGSLGDCATFSFFGNKIITTGEGGMITTNDDDLAAKMRLLRGQGMDPNRRYWFPIVGFNYRMTNIQAAIGLAQLERVDEHLAARERVVGWYEQKLARLGNRVTKPHVALTGRHVFWMYTVRLGEGLSTTRDQVIKDLDALGIESRPVFHPMHIMPPYAHLATDDLKIAEACGVDGLNLPTHAGLTEADIDRVIAALDQVLV</sequence>